<gene>
    <name evidence="1" type="primary">purL</name>
    <name type="ordered locus">TT_C1155</name>
</gene>
<proteinExistence type="inferred from homology"/>
<reference key="1">
    <citation type="journal article" date="2004" name="Nat. Biotechnol.">
        <title>The genome sequence of the extreme thermophile Thermus thermophilus.</title>
        <authorList>
            <person name="Henne A."/>
            <person name="Brueggemann H."/>
            <person name="Raasch C."/>
            <person name="Wiezer A."/>
            <person name="Hartsch T."/>
            <person name="Liesegang H."/>
            <person name="Johann A."/>
            <person name="Lienard T."/>
            <person name="Gohl O."/>
            <person name="Martinez-Arias R."/>
            <person name="Jacobi C."/>
            <person name="Starkuviene V."/>
            <person name="Schlenczeck S."/>
            <person name="Dencker S."/>
            <person name="Huber R."/>
            <person name="Klenk H.-P."/>
            <person name="Kramer W."/>
            <person name="Merkl R."/>
            <person name="Gottschalk G."/>
            <person name="Fritz H.-J."/>
        </authorList>
    </citation>
    <scope>NUCLEOTIDE SEQUENCE [LARGE SCALE GENOMIC DNA]</scope>
    <source>
        <strain>ATCC BAA-163 / DSM 7039 / HB27</strain>
    </source>
</reference>
<evidence type="ECO:0000255" key="1">
    <source>
        <dbReference type="HAMAP-Rule" id="MF_00420"/>
    </source>
</evidence>
<keyword id="KW-0067">ATP-binding</keyword>
<keyword id="KW-0963">Cytoplasm</keyword>
<keyword id="KW-0436">Ligase</keyword>
<keyword id="KW-0460">Magnesium</keyword>
<keyword id="KW-0479">Metal-binding</keyword>
<keyword id="KW-0547">Nucleotide-binding</keyword>
<keyword id="KW-0658">Purine biosynthesis</keyword>
<comment type="function">
    <text evidence="1">Part of the phosphoribosylformylglycinamidine synthase complex involved in the purines biosynthetic pathway. Catalyzes the ATP-dependent conversion of formylglycinamide ribonucleotide (FGAR) and glutamine to yield formylglycinamidine ribonucleotide (FGAM) and glutamate. The FGAM synthase complex is composed of three subunits. PurQ produces an ammonia molecule by converting glutamine to glutamate. PurL transfers the ammonia molecule to FGAR to form FGAM in an ATP-dependent manner. PurS interacts with PurQ and PurL and is thought to assist in the transfer of the ammonia molecule from PurQ to PurL.</text>
</comment>
<comment type="catalytic activity">
    <reaction evidence="1">
        <text>N(2)-formyl-N(1)-(5-phospho-beta-D-ribosyl)glycinamide + L-glutamine + ATP + H2O = 2-formamido-N(1)-(5-O-phospho-beta-D-ribosyl)acetamidine + L-glutamate + ADP + phosphate + H(+)</text>
        <dbReference type="Rhea" id="RHEA:17129"/>
        <dbReference type="ChEBI" id="CHEBI:15377"/>
        <dbReference type="ChEBI" id="CHEBI:15378"/>
        <dbReference type="ChEBI" id="CHEBI:29985"/>
        <dbReference type="ChEBI" id="CHEBI:30616"/>
        <dbReference type="ChEBI" id="CHEBI:43474"/>
        <dbReference type="ChEBI" id="CHEBI:58359"/>
        <dbReference type="ChEBI" id="CHEBI:147286"/>
        <dbReference type="ChEBI" id="CHEBI:147287"/>
        <dbReference type="ChEBI" id="CHEBI:456216"/>
        <dbReference type="EC" id="6.3.5.3"/>
    </reaction>
</comment>
<comment type="pathway">
    <text evidence="1">Purine metabolism; IMP biosynthesis via de novo pathway; 5-amino-1-(5-phospho-D-ribosyl)imidazole from N(2)-formyl-N(1)-(5-phospho-D-ribosyl)glycinamide: step 1/2.</text>
</comment>
<comment type="subunit">
    <text evidence="1">Monomer. Part of the FGAM synthase complex composed of 1 PurL, 1 PurQ and 2 PurS subunits.</text>
</comment>
<comment type="subcellular location">
    <subcellularLocation>
        <location evidence="1">Cytoplasm</location>
    </subcellularLocation>
</comment>
<comment type="similarity">
    <text evidence="1">Belongs to the FGAMS family.</text>
</comment>
<name>PURL_THET2</name>
<sequence length="725" mass="78643">MEALAKEIGIPEGEYREIVQRLGREPNRVELLLFKVMWSEHCAYKNSRPLLKALPKEGEAVLQGPGENAGVVRVGEGWAVAFKIESHNHPSAVEPFQGAATGVGGILRDIMSMGARPIALLDSLRFGPPEEARSRYLLKGVVSGIAFYGNAIGVPTVGGDLYFHEGYRENPLVNAMCLGLLREEHLKRSRASLGRPIYYAGAKTGRDGIGGAAFASRELKEEKAEDRPAVQVGDPFLGKLLMEATLEAIELDLVEGVQDMGAAGLTSSLSELAHKSGLGVELHLDLVPTREEGMTPEELLLSESQERMVLVPKEGKEKALEEVFGRWGLDCVPVARTIPERVFRVLFRGEVVAEVPTEALAEAPTYVRVGREDPEVRRLRETPIPPLEADPQEVLRRLLASPNLASREAVYERYDHQVGTRTALLPGKGDAAVLWIKGTRLGVAAKVDQNPRYSRLHPRLGAMHALAEACRNVSVVGAKPLAYTDGLNLGSPETPEGYHELAETIAGLKEASEALGVPVVSGNVSLYNESGGKRIPPTAMVGVVGVLEVDKRAEMGFRRPGEVLLLIGEERGELGASEVLYLLTGKEFGHPPRLDLGREKAVQEAIRDLIQRGLTRTAHDVAEGGLLLALAEMTFPYGVGATVEVREEGLEALFGEAPSRVLFTVEKTRLQEATLLLEERGLPYRVLGETGGKSLTVLTPGGVLEWSLEELLSAWKAPLREVLDG</sequence>
<feature type="chain" id="PRO_0000100502" description="Phosphoribosylformylglycinamidine synthase subunit PurL">
    <location>
        <begin position="1"/>
        <end position="725"/>
    </location>
</feature>
<feature type="active site" evidence="1">
    <location>
        <position position="41"/>
    </location>
</feature>
<feature type="active site" description="Proton acceptor" evidence="1">
    <location>
        <position position="87"/>
    </location>
</feature>
<feature type="binding site" evidence="1">
    <location>
        <position position="44"/>
    </location>
    <ligand>
        <name>ATP</name>
        <dbReference type="ChEBI" id="CHEBI:30616"/>
    </ligand>
</feature>
<feature type="binding site" evidence="1">
    <location>
        <position position="83"/>
    </location>
    <ligand>
        <name>ATP</name>
        <dbReference type="ChEBI" id="CHEBI:30616"/>
    </ligand>
</feature>
<feature type="binding site" evidence="1">
    <location>
        <position position="85"/>
    </location>
    <ligand>
        <name>Mg(2+)</name>
        <dbReference type="ChEBI" id="CHEBI:18420"/>
        <label>1</label>
    </ligand>
</feature>
<feature type="binding site" evidence="1">
    <location>
        <begin position="86"/>
        <end position="89"/>
    </location>
    <ligand>
        <name>substrate</name>
    </ligand>
</feature>
<feature type="binding site" evidence="1">
    <location>
        <position position="108"/>
    </location>
    <ligand>
        <name>substrate</name>
    </ligand>
</feature>
<feature type="binding site" evidence="1">
    <location>
        <position position="109"/>
    </location>
    <ligand>
        <name>Mg(2+)</name>
        <dbReference type="ChEBI" id="CHEBI:18420"/>
        <label>2</label>
    </ligand>
</feature>
<feature type="binding site" evidence="1">
    <location>
        <position position="231"/>
    </location>
    <ligand>
        <name>substrate</name>
    </ligand>
</feature>
<feature type="binding site" evidence="1">
    <location>
        <position position="259"/>
    </location>
    <ligand>
        <name>Mg(2+)</name>
        <dbReference type="ChEBI" id="CHEBI:18420"/>
        <label>2</label>
    </ligand>
</feature>
<feature type="binding site" evidence="1">
    <location>
        <begin position="303"/>
        <end position="305"/>
    </location>
    <ligand>
        <name>substrate</name>
    </ligand>
</feature>
<feature type="binding site" evidence="1">
    <location>
        <position position="485"/>
    </location>
    <ligand>
        <name>ATP</name>
        <dbReference type="ChEBI" id="CHEBI:30616"/>
    </ligand>
</feature>
<feature type="binding site" evidence="1">
    <location>
        <position position="522"/>
    </location>
    <ligand>
        <name>ATP</name>
        <dbReference type="ChEBI" id="CHEBI:30616"/>
    </ligand>
</feature>
<feature type="binding site" evidence="1">
    <location>
        <position position="523"/>
    </location>
    <ligand>
        <name>Mg(2+)</name>
        <dbReference type="ChEBI" id="CHEBI:18420"/>
        <label>1</label>
    </ligand>
</feature>
<feature type="binding site" evidence="1">
    <location>
        <position position="525"/>
    </location>
    <ligand>
        <name>substrate</name>
    </ligand>
</feature>
<dbReference type="EC" id="6.3.5.3" evidence="1"/>
<dbReference type="EMBL" id="AE017221">
    <property type="protein sequence ID" value="AAS81497.1"/>
    <property type="molecule type" value="Genomic_DNA"/>
</dbReference>
<dbReference type="RefSeq" id="WP_011173566.1">
    <property type="nucleotide sequence ID" value="NC_005835.1"/>
</dbReference>
<dbReference type="SMR" id="Q72IH7"/>
<dbReference type="GeneID" id="3168862"/>
<dbReference type="KEGG" id="tth:TT_C1155"/>
<dbReference type="eggNOG" id="COG0046">
    <property type="taxonomic scope" value="Bacteria"/>
</dbReference>
<dbReference type="HOGENOM" id="CLU_003100_0_1_0"/>
<dbReference type="OrthoDB" id="9804441at2"/>
<dbReference type="UniPathway" id="UPA00074">
    <property type="reaction ID" value="UER00128"/>
</dbReference>
<dbReference type="Proteomes" id="UP000000592">
    <property type="component" value="Chromosome"/>
</dbReference>
<dbReference type="GO" id="GO:0005737">
    <property type="term" value="C:cytoplasm"/>
    <property type="evidence" value="ECO:0007669"/>
    <property type="project" value="UniProtKB-SubCell"/>
</dbReference>
<dbReference type="GO" id="GO:0005524">
    <property type="term" value="F:ATP binding"/>
    <property type="evidence" value="ECO:0007669"/>
    <property type="project" value="UniProtKB-UniRule"/>
</dbReference>
<dbReference type="GO" id="GO:0000287">
    <property type="term" value="F:magnesium ion binding"/>
    <property type="evidence" value="ECO:0007669"/>
    <property type="project" value="UniProtKB-UniRule"/>
</dbReference>
<dbReference type="GO" id="GO:0004642">
    <property type="term" value="F:phosphoribosylformylglycinamidine synthase activity"/>
    <property type="evidence" value="ECO:0007669"/>
    <property type="project" value="UniProtKB-UniRule"/>
</dbReference>
<dbReference type="GO" id="GO:0006189">
    <property type="term" value="P:'de novo' IMP biosynthetic process"/>
    <property type="evidence" value="ECO:0007669"/>
    <property type="project" value="UniProtKB-UniRule"/>
</dbReference>
<dbReference type="CDD" id="cd02203">
    <property type="entry name" value="PurL_repeat1"/>
    <property type="match status" value="1"/>
</dbReference>
<dbReference type="CDD" id="cd02204">
    <property type="entry name" value="PurL_repeat2"/>
    <property type="match status" value="1"/>
</dbReference>
<dbReference type="FunFam" id="3.30.1330.10:FF:000004">
    <property type="entry name" value="Phosphoribosylformylglycinamidine synthase subunit PurL"/>
    <property type="match status" value="1"/>
</dbReference>
<dbReference type="Gene3D" id="3.90.650.10">
    <property type="entry name" value="PurM-like C-terminal domain"/>
    <property type="match status" value="2"/>
</dbReference>
<dbReference type="Gene3D" id="3.30.1330.10">
    <property type="entry name" value="PurM-like, N-terminal domain"/>
    <property type="match status" value="2"/>
</dbReference>
<dbReference type="HAMAP" id="MF_00420">
    <property type="entry name" value="PurL_2"/>
    <property type="match status" value="1"/>
</dbReference>
<dbReference type="InterPro" id="IPR010074">
    <property type="entry name" value="PRibForGlyAmidine_synth_PurL"/>
</dbReference>
<dbReference type="InterPro" id="IPR041609">
    <property type="entry name" value="PurL_linker"/>
</dbReference>
<dbReference type="InterPro" id="IPR010918">
    <property type="entry name" value="PurM-like_C_dom"/>
</dbReference>
<dbReference type="InterPro" id="IPR036676">
    <property type="entry name" value="PurM-like_C_sf"/>
</dbReference>
<dbReference type="InterPro" id="IPR016188">
    <property type="entry name" value="PurM-like_N"/>
</dbReference>
<dbReference type="InterPro" id="IPR036921">
    <property type="entry name" value="PurM-like_N_sf"/>
</dbReference>
<dbReference type="NCBIfam" id="TIGR01736">
    <property type="entry name" value="FGAM_synth_II"/>
    <property type="match status" value="1"/>
</dbReference>
<dbReference type="NCBIfam" id="NF002290">
    <property type="entry name" value="PRK01213.1"/>
    <property type="match status" value="1"/>
</dbReference>
<dbReference type="PANTHER" id="PTHR43555">
    <property type="entry name" value="PHOSPHORIBOSYLFORMYLGLYCINAMIDINE SYNTHASE SUBUNIT PURL"/>
    <property type="match status" value="1"/>
</dbReference>
<dbReference type="PANTHER" id="PTHR43555:SF1">
    <property type="entry name" value="PHOSPHORIBOSYLFORMYLGLYCINAMIDINE SYNTHASE SUBUNIT PURL"/>
    <property type="match status" value="1"/>
</dbReference>
<dbReference type="Pfam" id="PF00586">
    <property type="entry name" value="AIRS"/>
    <property type="match status" value="2"/>
</dbReference>
<dbReference type="Pfam" id="PF02769">
    <property type="entry name" value="AIRS_C"/>
    <property type="match status" value="2"/>
</dbReference>
<dbReference type="Pfam" id="PF18072">
    <property type="entry name" value="FGAR-AT_linker"/>
    <property type="match status" value="1"/>
</dbReference>
<dbReference type="PIRSF" id="PIRSF001587">
    <property type="entry name" value="FGAM_synthase_II"/>
    <property type="match status" value="1"/>
</dbReference>
<dbReference type="SUPFAM" id="SSF56042">
    <property type="entry name" value="PurM C-terminal domain-like"/>
    <property type="match status" value="2"/>
</dbReference>
<dbReference type="SUPFAM" id="SSF55326">
    <property type="entry name" value="PurM N-terminal domain-like"/>
    <property type="match status" value="2"/>
</dbReference>
<protein>
    <recommendedName>
        <fullName evidence="1">Phosphoribosylformylglycinamidine synthase subunit PurL</fullName>
        <shortName evidence="1">FGAM synthase</shortName>
        <ecNumber evidence="1">6.3.5.3</ecNumber>
    </recommendedName>
    <alternativeName>
        <fullName evidence="1">Formylglycinamide ribonucleotide amidotransferase subunit II</fullName>
        <shortName evidence="1">FGAR amidotransferase II</shortName>
        <shortName evidence="1">FGAR-AT II</shortName>
    </alternativeName>
    <alternativeName>
        <fullName evidence="1">Glutamine amidotransferase PurL</fullName>
    </alternativeName>
    <alternativeName>
        <fullName evidence="1">Phosphoribosylformylglycinamidine synthase subunit II</fullName>
    </alternativeName>
</protein>
<organism>
    <name type="scientific">Thermus thermophilus (strain ATCC BAA-163 / DSM 7039 / HB27)</name>
    <dbReference type="NCBI Taxonomy" id="262724"/>
    <lineage>
        <taxon>Bacteria</taxon>
        <taxon>Thermotogati</taxon>
        <taxon>Deinococcota</taxon>
        <taxon>Deinococci</taxon>
        <taxon>Thermales</taxon>
        <taxon>Thermaceae</taxon>
        <taxon>Thermus</taxon>
    </lineage>
</organism>
<accession>Q72IH7</accession>